<evidence type="ECO:0000255" key="1">
    <source>
        <dbReference type="HAMAP-Rule" id="MF_00581"/>
    </source>
</evidence>
<evidence type="ECO:0000256" key="2">
    <source>
        <dbReference type="SAM" id="MobiDB-lite"/>
    </source>
</evidence>
<reference key="1">
    <citation type="submission" date="2007-02" db="EMBL/GenBank/DDBJ databases">
        <title>Complete sequence of chromosome of Yersinia pestis Pestoides F.</title>
        <authorList>
            <consortium name="US DOE Joint Genome Institute"/>
            <person name="Copeland A."/>
            <person name="Lucas S."/>
            <person name="Lapidus A."/>
            <person name="Barry K."/>
            <person name="Detter J.C."/>
            <person name="Glavina del Rio T."/>
            <person name="Hammon N."/>
            <person name="Israni S."/>
            <person name="Dalin E."/>
            <person name="Tice H."/>
            <person name="Pitluck S."/>
            <person name="Di Bartolo G."/>
            <person name="Chain P."/>
            <person name="Malfatti S."/>
            <person name="Shin M."/>
            <person name="Vergez L."/>
            <person name="Schmutz J."/>
            <person name="Larimer F."/>
            <person name="Land M."/>
            <person name="Hauser L."/>
            <person name="Worsham P."/>
            <person name="Chu M."/>
            <person name="Bearden S."/>
            <person name="Garcia E."/>
            <person name="Richardson P."/>
        </authorList>
    </citation>
    <scope>NUCLEOTIDE SEQUENCE [LARGE SCALE GENOMIC DNA]</scope>
    <source>
        <strain>Pestoides F</strain>
    </source>
</reference>
<dbReference type="EC" id="6.3.4.5" evidence="1"/>
<dbReference type="EMBL" id="CP000668">
    <property type="protein sequence ID" value="ABP39795.1"/>
    <property type="molecule type" value="Genomic_DNA"/>
</dbReference>
<dbReference type="RefSeq" id="WP_002211920.1">
    <property type="nucleotide sequence ID" value="NZ_CP009715.1"/>
</dbReference>
<dbReference type="SMR" id="A4TKI3"/>
<dbReference type="GeneID" id="96665184"/>
<dbReference type="KEGG" id="ypp:YPDSF_1406"/>
<dbReference type="PATRIC" id="fig|386656.14.peg.2385"/>
<dbReference type="UniPathway" id="UPA00068">
    <property type="reaction ID" value="UER00113"/>
</dbReference>
<dbReference type="GO" id="GO:0005737">
    <property type="term" value="C:cytoplasm"/>
    <property type="evidence" value="ECO:0007669"/>
    <property type="project" value="UniProtKB-SubCell"/>
</dbReference>
<dbReference type="GO" id="GO:0004055">
    <property type="term" value="F:argininosuccinate synthase activity"/>
    <property type="evidence" value="ECO:0007669"/>
    <property type="project" value="UniProtKB-UniRule"/>
</dbReference>
<dbReference type="GO" id="GO:0005524">
    <property type="term" value="F:ATP binding"/>
    <property type="evidence" value="ECO:0007669"/>
    <property type="project" value="UniProtKB-UniRule"/>
</dbReference>
<dbReference type="GO" id="GO:0042803">
    <property type="term" value="F:protein homodimerization activity"/>
    <property type="evidence" value="ECO:0007669"/>
    <property type="project" value="InterPro"/>
</dbReference>
<dbReference type="GO" id="GO:0000053">
    <property type="term" value="P:argininosuccinate metabolic process"/>
    <property type="evidence" value="ECO:0007669"/>
    <property type="project" value="TreeGrafter"/>
</dbReference>
<dbReference type="GO" id="GO:0006526">
    <property type="term" value="P:L-arginine biosynthetic process"/>
    <property type="evidence" value="ECO:0007669"/>
    <property type="project" value="UniProtKB-UniRule"/>
</dbReference>
<dbReference type="GO" id="GO:0000050">
    <property type="term" value="P:urea cycle"/>
    <property type="evidence" value="ECO:0007669"/>
    <property type="project" value="TreeGrafter"/>
</dbReference>
<dbReference type="CDD" id="cd01999">
    <property type="entry name" value="ASS"/>
    <property type="match status" value="1"/>
</dbReference>
<dbReference type="FunFam" id="1.10.287.400:FF:000001">
    <property type="entry name" value="Argininosuccinate synthase"/>
    <property type="match status" value="1"/>
</dbReference>
<dbReference type="Gene3D" id="1.10.287.400">
    <property type="match status" value="1"/>
</dbReference>
<dbReference type="Gene3D" id="3.90.1260.10">
    <property type="entry name" value="Argininosuccinate synthetase, chain A, domain 2"/>
    <property type="match status" value="1"/>
</dbReference>
<dbReference type="Gene3D" id="3.40.50.620">
    <property type="entry name" value="HUPs"/>
    <property type="match status" value="1"/>
</dbReference>
<dbReference type="HAMAP" id="MF_00581">
    <property type="entry name" value="Arg_succ_synth_type2"/>
    <property type="match status" value="1"/>
</dbReference>
<dbReference type="InterPro" id="IPR023437">
    <property type="entry name" value="Arg_succ_synth_type2_subfam"/>
</dbReference>
<dbReference type="InterPro" id="IPR048268">
    <property type="entry name" value="Arginosuc_syn_C"/>
</dbReference>
<dbReference type="InterPro" id="IPR048267">
    <property type="entry name" value="Arginosuc_syn_N"/>
</dbReference>
<dbReference type="InterPro" id="IPR001518">
    <property type="entry name" value="Arginosuc_synth"/>
</dbReference>
<dbReference type="InterPro" id="IPR018223">
    <property type="entry name" value="Arginosuc_synth_CS"/>
</dbReference>
<dbReference type="InterPro" id="IPR023434">
    <property type="entry name" value="Arginosuc_synth_type_1_subfam"/>
</dbReference>
<dbReference type="InterPro" id="IPR024074">
    <property type="entry name" value="AS_cat/multimer_dom_body"/>
</dbReference>
<dbReference type="InterPro" id="IPR024073">
    <property type="entry name" value="AS_multimer_C_tail"/>
</dbReference>
<dbReference type="InterPro" id="IPR014729">
    <property type="entry name" value="Rossmann-like_a/b/a_fold"/>
</dbReference>
<dbReference type="NCBIfam" id="TIGR00032">
    <property type="entry name" value="argG"/>
    <property type="match status" value="1"/>
</dbReference>
<dbReference type="NCBIfam" id="NF003779">
    <property type="entry name" value="PRK05370.1"/>
    <property type="match status" value="1"/>
</dbReference>
<dbReference type="PANTHER" id="PTHR11587">
    <property type="entry name" value="ARGININOSUCCINATE SYNTHASE"/>
    <property type="match status" value="1"/>
</dbReference>
<dbReference type="PANTHER" id="PTHR11587:SF2">
    <property type="entry name" value="ARGININOSUCCINATE SYNTHASE"/>
    <property type="match status" value="1"/>
</dbReference>
<dbReference type="Pfam" id="PF20979">
    <property type="entry name" value="Arginosuc_syn_C"/>
    <property type="match status" value="1"/>
</dbReference>
<dbReference type="Pfam" id="PF00764">
    <property type="entry name" value="Arginosuc_synth"/>
    <property type="match status" value="1"/>
</dbReference>
<dbReference type="SUPFAM" id="SSF52402">
    <property type="entry name" value="Adenine nucleotide alpha hydrolases-like"/>
    <property type="match status" value="1"/>
</dbReference>
<dbReference type="SUPFAM" id="SSF69864">
    <property type="entry name" value="Argininosuccinate synthetase, C-terminal domain"/>
    <property type="match status" value="1"/>
</dbReference>
<dbReference type="PROSITE" id="PS00564">
    <property type="entry name" value="ARGININOSUCCIN_SYN_1"/>
    <property type="match status" value="1"/>
</dbReference>
<dbReference type="PROSITE" id="PS00565">
    <property type="entry name" value="ARGININOSUCCIN_SYN_2"/>
    <property type="match status" value="1"/>
</dbReference>
<comment type="catalytic activity">
    <reaction evidence="1">
        <text>L-citrulline + L-aspartate + ATP = 2-(N(omega)-L-arginino)succinate + AMP + diphosphate + H(+)</text>
        <dbReference type="Rhea" id="RHEA:10932"/>
        <dbReference type="ChEBI" id="CHEBI:15378"/>
        <dbReference type="ChEBI" id="CHEBI:29991"/>
        <dbReference type="ChEBI" id="CHEBI:30616"/>
        <dbReference type="ChEBI" id="CHEBI:33019"/>
        <dbReference type="ChEBI" id="CHEBI:57472"/>
        <dbReference type="ChEBI" id="CHEBI:57743"/>
        <dbReference type="ChEBI" id="CHEBI:456215"/>
        <dbReference type="EC" id="6.3.4.5"/>
    </reaction>
</comment>
<comment type="pathway">
    <text evidence="1">Amino-acid biosynthesis; L-arginine biosynthesis; L-arginine from L-ornithine and carbamoyl phosphate: step 2/3.</text>
</comment>
<comment type="subunit">
    <text evidence="1">Homotetramer.</text>
</comment>
<comment type="subcellular location">
    <subcellularLocation>
        <location evidence="1">Cytoplasm</location>
    </subcellularLocation>
</comment>
<comment type="similarity">
    <text evidence="1">Belongs to the argininosuccinate synthase family. Type 2 subfamily.</text>
</comment>
<keyword id="KW-0028">Amino-acid biosynthesis</keyword>
<keyword id="KW-0055">Arginine biosynthesis</keyword>
<keyword id="KW-0067">ATP-binding</keyword>
<keyword id="KW-0963">Cytoplasm</keyword>
<keyword id="KW-0436">Ligase</keyword>
<keyword id="KW-0547">Nucleotide-binding</keyword>
<protein>
    <recommendedName>
        <fullName evidence="1">Argininosuccinate synthase</fullName>
        <ecNumber evidence="1">6.3.4.5</ecNumber>
    </recommendedName>
    <alternativeName>
        <fullName evidence="1">Citrulline--aspartate ligase</fullName>
    </alternativeName>
</protein>
<name>ASSY_YERPP</name>
<proteinExistence type="inferred from homology"/>
<organism>
    <name type="scientific">Yersinia pestis (strain Pestoides F)</name>
    <dbReference type="NCBI Taxonomy" id="386656"/>
    <lineage>
        <taxon>Bacteria</taxon>
        <taxon>Pseudomonadati</taxon>
        <taxon>Pseudomonadota</taxon>
        <taxon>Gammaproteobacteria</taxon>
        <taxon>Enterobacterales</taxon>
        <taxon>Yersiniaceae</taxon>
        <taxon>Yersinia</taxon>
    </lineage>
</organism>
<accession>A4TKI3</accession>
<sequence length="455" mass="51009">MTTILKHLPINQRVGIAFSGGLDTSAALLWMQKKGAIPYAYTANLGQPDEEDYEAIPRKAMEYGAEKARLIDCRKQLVAEGIAAIQCGAFHNTTAGVTYFNTTPLGRAVTGTMLVAAMKEDDVNIWGDGSTYKGNDIERFYRYGLLTNAELKIYKPWLDTDFIDELGGRHEMSEFMIQSGFDYKMSTEKAYSTDSNMLGATHEAKDLEFLNSSVKIVNPIMGVKFWDENVVVKAEEVTVRFERGYPVALNGVVFDDSVELMMEANRIGGRHGLGMSDQIENRIIEAKSRGIYEAPGMALLHIAYERLLTGIHNEDTIEQYHANGRVLGRLLYQGRWFDPQALMLRDSIQRWVASEITGEVTLELRRGNDYSILNTVSDNLTYKPERLTMEKGDSVFSPDDRIGQLTMRNLDITDTREKLFNYVETGLLTSSAATGLPQVDNNNLSSGRGLQDKRQ</sequence>
<gene>
    <name evidence="1" type="primary">argG</name>
    <name type="ordered locus">YPDSF_1406</name>
</gene>
<feature type="chain" id="PRO_1000025447" description="Argininosuccinate synthase">
    <location>
        <begin position="1"/>
        <end position="455"/>
    </location>
</feature>
<feature type="region of interest" description="Disordered" evidence="2">
    <location>
        <begin position="434"/>
        <end position="455"/>
    </location>
</feature>
<feature type="compositionally biased region" description="Polar residues" evidence="2">
    <location>
        <begin position="434"/>
        <end position="448"/>
    </location>
</feature>
<feature type="binding site" evidence="1">
    <location>
        <begin position="17"/>
        <end position="25"/>
    </location>
    <ligand>
        <name>ATP</name>
        <dbReference type="ChEBI" id="CHEBI:30616"/>
    </ligand>
</feature>
<feature type="binding site" evidence="1">
    <location>
        <position position="43"/>
    </location>
    <ligand>
        <name>ATP</name>
        <dbReference type="ChEBI" id="CHEBI:30616"/>
    </ligand>
</feature>
<feature type="binding site" evidence="1">
    <location>
        <position position="99"/>
    </location>
    <ligand>
        <name>L-citrulline</name>
        <dbReference type="ChEBI" id="CHEBI:57743"/>
    </ligand>
</feature>
<feature type="binding site" evidence="1">
    <location>
        <position position="129"/>
    </location>
    <ligand>
        <name>ATP</name>
        <dbReference type="ChEBI" id="CHEBI:30616"/>
    </ligand>
</feature>
<feature type="binding site" evidence="1">
    <location>
        <position position="131"/>
    </location>
    <ligand>
        <name>ATP</name>
        <dbReference type="ChEBI" id="CHEBI:30616"/>
    </ligand>
</feature>
<feature type="binding site" evidence="1">
    <location>
        <position position="131"/>
    </location>
    <ligand>
        <name>L-aspartate</name>
        <dbReference type="ChEBI" id="CHEBI:29991"/>
    </ligand>
</feature>
<feature type="binding site" evidence="1">
    <location>
        <position position="135"/>
    </location>
    <ligand>
        <name>L-aspartate</name>
        <dbReference type="ChEBI" id="CHEBI:29991"/>
    </ligand>
</feature>
<feature type="binding site" evidence="1">
    <location>
        <position position="135"/>
    </location>
    <ligand>
        <name>L-citrulline</name>
        <dbReference type="ChEBI" id="CHEBI:57743"/>
    </ligand>
</feature>
<feature type="binding site" evidence="1">
    <location>
        <position position="136"/>
    </location>
    <ligand>
        <name>ATP</name>
        <dbReference type="ChEBI" id="CHEBI:30616"/>
    </ligand>
</feature>
<feature type="binding site" evidence="1">
    <location>
        <position position="136"/>
    </location>
    <ligand>
        <name>L-aspartate</name>
        <dbReference type="ChEBI" id="CHEBI:29991"/>
    </ligand>
</feature>
<feature type="binding site" evidence="1">
    <location>
        <position position="139"/>
    </location>
    <ligand>
        <name>L-citrulline</name>
        <dbReference type="ChEBI" id="CHEBI:57743"/>
    </ligand>
</feature>
<feature type="binding site" evidence="1">
    <location>
        <position position="192"/>
    </location>
    <ligand>
        <name>L-citrulline</name>
        <dbReference type="ChEBI" id="CHEBI:57743"/>
    </ligand>
</feature>
<feature type="binding site" evidence="1">
    <location>
        <position position="194"/>
    </location>
    <ligand>
        <name>ATP</name>
        <dbReference type="ChEBI" id="CHEBI:30616"/>
    </ligand>
</feature>
<feature type="binding site" evidence="1">
    <location>
        <position position="201"/>
    </location>
    <ligand>
        <name>L-citrulline</name>
        <dbReference type="ChEBI" id="CHEBI:57743"/>
    </ligand>
</feature>
<feature type="binding site" evidence="1">
    <location>
        <position position="203"/>
    </location>
    <ligand>
        <name>L-citrulline</name>
        <dbReference type="ChEBI" id="CHEBI:57743"/>
    </ligand>
</feature>
<feature type="binding site" evidence="1">
    <location>
        <position position="280"/>
    </location>
    <ligand>
        <name>L-citrulline</name>
        <dbReference type="ChEBI" id="CHEBI:57743"/>
    </ligand>
</feature>